<proteinExistence type="inferred from homology"/>
<accession>P0DV45</accession>
<sequence length="852" mass="96352">MLNKSAALVPVVLAFLFLFLCFQCLYADIRCLTGKDGAVHLEMEAKPLTIEPRPGVFFDAWGYCLKGDVPTVPGPVIKVREGTKVKILFRNKLTVPASIHPHGVKYTTANVGVNIAGNPASIVAPGDSRIFEWDTAGTPGTWFYHSYVFERGGEEGLSRGLWGALIVEPVGGDPNPPDKEFVVFMHAFNVNGQEYYAFNNKSGDIELMRGDSSAFPGETWKAKMGDKVRFHLINITEEAHTFHTHGHRWLDKSCDKLIDTIGLNPFDSYVLDFVAGEGVGKGNWAFHCQSQEHMMNGMFGIFMVEEGKRVNAVIASCDEGRKTLSAPGQDRQPPTLEGFSGAYMYPEITEKNMYESFAGLEKGDGIWGDYYSPIPLYTYFNPSRHYVPPESDAYTNLLVKYRPDQCVECHEETTPGIVAEWKMSNHANPKKNPHVSAETQEIEALIGKELNNWRPGTKDGVYCSYCHGSDHEKLFMPTVDNSCGACHPKQAAEFIKGRDHGRPNHPQSWEGNVSTPWYAEYYRRGEGYSMVGCDQCHQNMSSCDDCHSRHRFSAAEARRPEACSICHMGPDHPDWESYSRSKWGVIYETTKERWNWDKNLAEVIPGEDYLAPTCQYCHMYVGNNKWEMNVETKGIWRMGVIPPKEVEFKSGLKDFPYGIKIPPMDKKLEIYSAESQEKRRKWVELCSKCHSSRFAGMWLDSLDQYMFESWRRIDEAQLIIEKLFSENAIEPPPEKRPPFPLSDLIIKVLGAEKLGAEMYRLFKQTNGHLPVIGPILGAYSIFTQNEGNPGGIEREYAEMWFWSHLQGYKGAAHAQPDISWWWGTAQGVGNLTRIRDEAEKLRRLKSGSSSGF</sequence>
<organism>
    <name type="scientific">Kuenenia stuttgartiensis</name>
    <dbReference type="NCBI Taxonomy" id="174633"/>
    <lineage>
        <taxon>Bacteria</taxon>
        <taxon>Pseudomonadati</taxon>
        <taxon>Planctomycetota</taxon>
        <taxon>Candidatus Brocadiia</taxon>
        <taxon>Candidatus Brocadiales</taxon>
        <taxon>Candidatus Brocadiaceae</taxon>
        <taxon>Candidatus Kuenenia</taxon>
    </lineage>
</organism>
<feature type="signal peptide" evidence="3">
    <location>
        <begin position="1"/>
        <end position="27"/>
    </location>
</feature>
<feature type="chain" id="PRO_0000455329" description="Probable nitrite reductase-hydroxylamine oxidoreductase fusion protein">
    <location>
        <begin position="28"/>
        <end position="852"/>
    </location>
</feature>
<feature type="domain" description="Plastocyanin-like 1" evidence="3">
    <location>
        <begin position="72"/>
        <end position="169"/>
    </location>
</feature>
<feature type="domain" description="Plastocyanin-like 2" evidence="3">
    <location>
        <begin position="217"/>
        <end position="307"/>
    </location>
</feature>
<feature type="region of interest" description="Nitrite reductase domain" evidence="7">
    <location>
        <begin position="28"/>
        <end position="327"/>
    </location>
</feature>
<feature type="region of interest" description="Hydroxylamine oxidoreductase domain" evidence="7">
    <location>
        <begin position="328"/>
        <end position="827"/>
    </location>
</feature>
<feature type="binding site" description="type 1 copper site" evidence="1">
    <location>
        <position position="102"/>
    </location>
    <ligand>
        <name>Cu cation</name>
        <dbReference type="ChEBI" id="CHEBI:23378"/>
        <label>1</label>
    </ligand>
</feature>
<feature type="binding site" description="type 2 copper site" evidence="1">
    <location>
        <position position="145"/>
    </location>
    <ligand>
        <name>Cu cation</name>
        <dbReference type="ChEBI" id="CHEBI:23378"/>
        <label>2</label>
    </ligand>
</feature>
<feature type="binding site" description="covalent" evidence="2">
    <location>
        <position position="406"/>
    </location>
    <ligand>
        <name>heme</name>
        <dbReference type="ChEBI" id="CHEBI:30413"/>
        <label>1</label>
    </ligand>
</feature>
<feature type="binding site" description="covalent" evidence="2">
    <location>
        <position position="409"/>
    </location>
    <ligand>
        <name>heme</name>
        <dbReference type="ChEBI" id="CHEBI:30413"/>
        <label>1</label>
    </ligand>
</feature>
<feature type="binding site" description="axial binding residue" evidence="2">
    <location>
        <position position="410"/>
    </location>
    <ligand>
        <name>heme</name>
        <dbReference type="ChEBI" id="CHEBI:30413"/>
        <label>1</label>
    </ligand>
    <ligandPart>
        <name>Fe</name>
        <dbReference type="ChEBI" id="CHEBI:18248"/>
    </ligandPart>
</feature>
<feature type="binding site" description="axial binding residue" evidence="2">
    <location>
        <position position="426"/>
    </location>
    <ligand>
        <name>heme</name>
        <dbReference type="ChEBI" id="CHEBI:30413"/>
        <label>3</label>
    </ligand>
    <ligandPart>
        <name>Fe</name>
        <dbReference type="ChEBI" id="CHEBI:18248"/>
    </ligandPart>
</feature>
<feature type="binding site" description="covalent" evidence="2">
    <location>
        <position position="463"/>
    </location>
    <ligand>
        <name>heme</name>
        <dbReference type="ChEBI" id="CHEBI:30413"/>
        <label>2</label>
    </ligand>
</feature>
<feature type="binding site" description="covalent" evidence="2">
    <location>
        <position position="466"/>
    </location>
    <ligand>
        <name>heme</name>
        <dbReference type="ChEBI" id="CHEBI:30413"/>
        <label>2</label>
    </ligand>
</feature>
<feature type="binding site" description="axial binding residue" evidence="2">
    <location>
        <position position="467"/>
    </location>
    <ligand>
        <name>heme</name>
        <dbReference type="ChEBI" id="CHEBI:30413"/>
        <label>2</label>
    </ligand>
    <ligandPart>
        <name>Fe</name>
        <dbReference type="ChEBI" id="CHEBI:18248"/>
    </ligandPart>
</feature>
<feature type="binding site" description="axial binding residue" evidence="2">
    <location>
        <position position="471"/>
    </location>
    <ligand>
        <name>heme</name>
        <dbReference type="ChEBI" id="CHEBI:30413"/>
        <label>1</label>
    </ligand>
    <ligandPart>
        <name>Fe</name>
        <dbReference type="ChEBI" id="CHEBI:18248"/>
    </ligandPart>
</feature>
<feature type="binding site" description="covalent" evidence="2">
    <location>
        <position position="483"/>
    </location>
    <ligand>
        <name>heme</name>
        <dbReference type="ChEBI" id="CHEBI:30413"/>
        <label>3</label>
    </ligand>
</feature>
<feature type="binding site" description="covalent" evidence="2">
    <location>
        <position position="486"/>
    </location>
    <ligand>
        <name>heme</name>
        <dbReference type="ChEBI" id="CHEBI:30413"/>
        <label>3</label>
    </ligand>
</feature>
<feature type="binding site" description="axial binding residue" evidence="2">
    <location>
        <position position="487"/>
    </location>
    <ligand>
        <name>heme</name>
        <dbReference type="ChEBI" id="CHEBI:30413"/>
        <label>3</label>
    </ligand>
    <ligandPart>
        <name>Fe</name>
        <dbReference type="ChEBI" id="CHEBI:18248"/>
    </ligandPart>
</feature>
<feature type="binding site" description="axial binding residue" evidence="2">
    <location>
        <position position="505"/>
    </location>
    <ligand>
        <name>heme</name>
        <dbReference type="ChEBI" id="CHEBI:30413"/>
        <label>6</label>
    </ligand>
    <ligandPart>
        <name>Fe</name>
        <dbReference type="ChEBI" id="CHEBI:18248"/>
    </ligandPart>
</feature>
<feature type="binding site" description="axial binding residue" evidence="2">
    <location>
        <position position="537"/>
    </location>
    <ligand>
        <name>heme</name>
        <dbReference type="ChEBI" id="CHEBI:30413"/>
        <label>4</label>
    </ligand>
    <ligandPart>
        <name>Fe</name>
        <dbReference type="ChEBI" id="CHEBI:18248"/>
    </ligandPart>
</feature>
<feature type="binding site" description="covalent" evidence="2">
    <location>
        <position position="543"/>
    </location>
    <ligand>
        <name>heme</name>
        <dbReference type="ChEBI" id="CHEBI:30413"/>
        <label>5</label>
    </ligand>
</feature>
<feature type="binding site" description="covalent" evidence="2">
    <location>
        <position position="546"/>
    </location>
    <ligand>
        <name>heme</name>
        <dbReference type="ChEBI" id="CHEBI:30413"/>
        <label>5</label>
    </ligand>
</feature>
<feature type="binding site" description="axial binding residue" evidence="2">
    <location>
        <position position="547"/>
    </location>
    <ligand>
        <name>heme</name>
        <dbReference type="ChEBI" id="CHEBI:30413"/>
        <label>5</label>
    </ligand>
    <ligandPart>
        <name>Fe</name>
        <dbReference type="ChEBI" id="CHEBI:18248"/>
    </ligandPart>
</feature>
<feature type="binding site" description="axial binding residue" evidence="2">
    <location>
        <position position="550"/>
    </location>
    <ligand>
        <name>heme</name>
        <dbReference type="ChEBI" id="CHEBI:30413"/>
        <label>2</label>
    </ligand>
    <ligandPart>
        <name>Fe</name>
        <dbReference type="ChEBI" id="CHEBI:18248"/>
    </ligandPart>
</feature>
<feature type="binding site" description="covalent" evidence="2">
    <location>
        <position position="563"/>
    </location>
    <ligand>
        <name>heme</name>
        <dbReference type="ChEBI" id="CHEBI:30413"/>
        <label>6</label>
    </ligand>
</feature>
<feature type="binding site" description="covalent" evidence="2">
    <location>
        <position position="566"/>
    </location>
    <ligand>
        <name>heme</name>
        <dbReference type="ChEBI" id="CHEBI:30413"/>
        <label>6</label>
    </ligand>
</feature>
<feature type="binding site" description="axial binding residue" evidence="2">
    <location>
        <position position="567"/>
    </location>
    <ligand>
        <name>heme</name>
        <dbReference type="ChEBI" id="CHEBI:30413"/>
        <label>6</label>
    </ligand>
    <ligandPart>
        <name>Fe</name>
        <dbReference type="ChEBI" id="CHEBI:18248"/>
    </ligandPart>
</feature>
<feature type="binding site" description="covalent" evidence="2">
    <location>
        <position position="614"/>
    </location>
    <ligand>
        <name>heme</name>
        <dbReference type="ChEBI" id="CHEBI:30413"/>
        <label>7</label>
    </ligand>
</feature>
<feature type="binding site" description="covalent" evidence="2">
    <location>
        <position position="617"/>
    </location>
    <ligand>
        <name>heme</name>
        <dbReference type="ChEBI" id="CHEBI:30413"/>
        <label>7</label>
    </ligand>
</feature>
<feature type="binding site" description="axial binding residue" evidence="2">
    <location>
        <position position="618"/>
    </location>
    <ligand>
        <name>heme</name>
        <dbReference type="ChEBI" id="CHEBI:30413"/>
        <label>7</label>
    </ligand>
    <ligandPart>
        <name>Fe</name>
        <dbReference type="ChEBI" id="CHEBI:18248"/>
    </ligandPart>
</feature>
<feature type="binding site" description="covalent" evidence="2">
    <location>
        <position position="686"/>
    </location>
    <ligand>
        <name>heme</name>
        <dbReference type="ChEBI" id="CHEBI:30413"/>
        <label>8</label>
    </ligand>
</feature>
<feature type="binding site" description="covalent" evidence="2">
    <location>
        <position position="689"/>
    </location>
    <ligand>
        <name>heme</name>
        <dbReference type="ChEBI" id="CHEBI:30413"/>
        <label>8</label>
    </ligand>
</feature>
<feature type="binding site" description="axial binding residue" evidence="2">
    <location>
        <position position="690"/>
    </location>
    <ligand>
        <name>heme</name>
        <dbReference type="ChEBI" id="CHEBI:30413"/>
        <label>8</label>
    </ligand>
    <ligandPart>
        <name>Fe</name>
        <dbReference type="ChEBI" id="CHEBI:18248"/>
    </ligandPart>
</feature>
<feature type="binding site" description="axial binding residue" evidence="2">
    <location>
        <position position="813"/>
    </location>
    <ligand>
        <name>heme</name>
        <dbReference type="ChEBI" id="CHEBI:30413"/>
        <label>7</label>
    </ligand>
    <ligandPart>
        <name>Fe</name>
        <dbReference type="ChEBI" id="CHEBI:18248"/>
    </ligandPart>
</feature>
<name>NRHAO_KUEST</name>
<evidence type="ECO:0000250" key="1">
    <source>
        <dbReference type="UniProtKB" id="Q02219"/>
    </source>
</evidence>
<evidence type="ECO:0000250" key="2">
    <source>
        <dbReference type="UniProtKB" id="Q50925"/>
    </source>
</evidence>
<evidence type="ECO:0000255" key="3"/>
<evidence type="ECO:0000269" key="4">
    <source>
    </source>
</evidence>
<evidence type="ECO:0000303" key="5">
    <source>
    </source>
</evidence>
<evidence type="ECO:0000305" key="6"/>
<evidence type="ECO:0000305" key="7">
    <source>
    </source>
</evidence>
<evidence type="ECO:0000312" key="8">
    <source>
        <dbReference type="EMBL" id="CAJ73226.1"/>
    </source>
</evidence>
<reference evidence="8" key="1">
    <citation type="journal article" date="2006" name="Nature">
        <title>Deciphering the evolution and metabolism of an anammox bacterium from a community genome.</title>
        <authorList>
            <person name="Strous M."/>
            <person name="Pelletier E."/>
            <person name="Mangenot S."/>
            <person name="Rattei T."/>
            <person name="Lehner A."/>
            <person name="Taylor M.W."/>
            <person name="Horn M."/>
            <person name="Daims H."/>
            <person name="Bartol-Mavel D."/>
            <person name="Wincker P."/>
            <person name="Barbe V."/>
            <person name="Fonknechten N."/>
            <person name="Vallenet D."/>
            <person name="Segurens B."/>
            <person name="Schenowitz-Truong C."/>
            <person name="Medigue C."/>
            <person name="Collingro A."/>
            <person name="Snel B."/>
            <person name="Dutilh B.E."/>
            <person name="Op den Camp H.J."/>
            <person name="van der Drift C."/>
            <person name="Cirpus I."/>
            <person name="van de Pas-Schoonen K.T."/>
            <person name="Harhangi H.R."/>
            <person name="van Niftrik L."/>
            <person name="Schmid M."/>
            <person name="Keltjens J."/>
            <person name="van de Vossenberg J."/>
            <person name="Kartal B."/>
            <person name="Meier H."/>
            <person name="Frishman D."/>
            <person name="Huynen M.A."/>
            <person name="Mewes H."/>
            <person name="Weissenbach J."/>
            <person name="Jetten M.S.M."/>
            <person name="Wagner M."/>
            <person name="Le Paslier D."/>
        </authorList>
    </citation>
    <scope>NUCLEOTIDE SEQUENCE [LARGE SCALE GENOMIC DNA]</scope>
</reference>
<reference key="2">
    <citation type="journal article" date="2017" name="Nat. Microbiol.">
        <title>Widespread distribution of encapsulin nanocompartments reveals functional diversity.</title>
        <authorList>
            <person name="Giessen T.W."/>
            <person name="Silver P.A."/>
        </authorList>
    </citation>
    <scope>FUNCTION</scope>
    <scope>SUBCELLULAR LOCATION</scope>
</reference>
<dbReference type="EC" id="1.7.2.1" evidence="1"/>
<dbReference type="EC" id="1.7.2.6" evidence="2"/>
<dbReference type="EMBL" id="CT573071">
    <property type="protein sequence ID" value="CAJ73226.1"/>
    <property type="molecule type" value="Genomic_DNA"/>
</dbReference>
<dbReference type="RefSeq" id="WP_099326442.1">
    <property type="nucleotide sequence ID" value="NZ_CP049055.1"/>
</dbReference>
<dbReference type="SMR" id="P0DV45"/>
<dbReference type="OrthoDB" id="223775at2"/>
<dbReference type="GO" id="GO:0140737">
    <property type="term" value="C:encapsulin nanocompartment"/>
    <property type="evidence" value="ECO:0000314"/>
    <property type="project" value="UniProtKB"/>
</dbReference>
<dbReference type="GO" id="GO:0005507">
    <property type="term" value="F:copper ion binding"/>
    <property type="evidence" value="ECO:0007669"/>
    <property type="project" value="InterPro"/>
</dbReference>
<dbReference type="GO" id="GO:0016491">
    <property type="term" value="F:oxidoreductase activity"/>
    <property type="evidence" value="ECO:0007669"/>
    <property type="project" value="UniProtKB-KW"/>
</dbReference>
<dbReference type="CDD" id="cd14449">
    <property type="entry name" value="CuRO_1_2DMCO_NIR_like_2"/>
    <property type="match status" value="1"/>
</dbReference>
<dbReference type="Gene3D" id="2.60.40.420">
    <property type="entry name" value="Cupredoxins - blue copper proteins"/>
    <property type="match status" value="1"/>
</dbReference>
<dbReference type="Gene3D" id="1.10.780.10">
    <property type="entry name" value="Hydroxylamine Oxidoreductase, Chain A, domain 1"/>
    <property type="match status" value="1"/>
</dbReference>
<dbReference type="Gene3D" id="1.20.850.10">
    <property type="entry name" value="Hydroxylamine Oxidoreductase, Chain A, domain 2"/>
    <property type="match status" value="1"/>
</dbReference>
<dbReference type="InterPro" id="IPR011707">
    <property type="entry name" value="Cu-oxidase-like_N"/>
</dbReference>
<dbReference type="InterPro" id="IPR011706">
    <property type="entry name" value="Cu-oxidase_C"/>
</dbReference>
<dbReference type="InterPro" id="IPR045087">
    <property type="entry name" value="Cu-oxidase_fam"/>
</dbReference>
<dbReference type="InterPro" id="IPR033138">
    <property type="entry name" value="Cu_oxidase_CS"/>
</dbReference>
<dbReference type="InterPro" id="IPR008972">
    <property type="entry name" value="Cupredoxin"/>
</dbReference>
<dbReference type="InterPro" id="IPR036280">
    <property type="entry name" value="Multihaem_cyt_sf"/>
</dbReference>
<dbReference type="PANTHER" id="PTHR11709">
    <property type="entry name" value="MULTI-COPPER OXIDASE"/>
    <property type="match status" value="1"/>
</dbReference>
<dbReference type="PANTHER" id="PTHR11709:SF486">
    <property type="entry name" value="MULTICOPPER OXIDASE"/>
    <property type="match status" value="1"/>
</dbReference>
<dbReference type="Pfam" id="PF07731">
    <property type="entry name" value="Cu-oxidase_2"/>
    <property type="match status" value="1"/>
</dbReference>
<dbReference type="Pfam" id="PF07732">
    <property type="entry name" value="Cu-oxidase_3"/>
    <property type="match status" value="1"/>
</dbReference>
<dbReference type="Pfam" id="PF13447">
    <property type="entry name" value="Multi-haem_cyto"/>
    <property type="match status" value="2"/>
</dbReference>
<dbReference type="SUPFAM" id="SSF49503">
    <property type="entry name" value="Cupredoxins"/>
    <property type="match status" value="2"/>
</dbReference>
<dbReference type="SUPFAM" id="SSF48695">
    <property type="entry name" value="Multiheme cytochromes"/>
    <property type="match status" value="1"/>
</dbReference>
<dbReference type="PROSITE" id="PS00079">
    <property type="entry name" value="MULTICOPPER_OXIDASE1"/>
    <property type="match status" value="1"/>
</dbReference>
<dbReference type="PROSITE" id="PS51008">
    <property type="entry name" value="MULTIHEME_CYTC"/>
    <property type="match status" value="1"/>
</dbReference>
<protein>
    <recommendedName>
        <fullName evidence="5">Probable nitrite reductase-hydroxylamine oxidoreductase fusion protein</fullName>
        <shortName evidence="5">NIR-HAO</shortName>
        <ecNumber evidence="1">1.7.2.1</ecNumber>
        <ecNumber evidence="2">1.7.2.6</ecNumber>
    </recommendedName>
</protein>
<comment type="function">
    <text evidence="1 2 7">A nitrite reductase-hydroxylamine oxidoreductase protein that probably functions in the type 1 encapsulin nanocompartment. Probably involved in reductive catalysis. Targeted to the encapsulin nanocompartment by association with the diheme domain of the encapsulin shell protein (AC Q1Q6L7) (Probable). Catalyzes the reduction of nitrite to nitric oxide (NO) (By similarity). Catalyzes the oxidation of hydroxylamine to nitrite (By similarity).</text>
</comment>
<comment type="catalytic activity">
    <reaction evidence="2">
        <text>hydroxylamine + 4 Fe(III)-[cytochrome c] + H2O = 4 Fe(II)-[cytochrome c] + nitrite + 5 H(+)</text>
        <dbReference type="Rhea" id="RHEA:45032"/>
        <dbReference type="Rhea" id="RHEA-COMP:10350"/>
        <dbReference type="Rhea" id="RHEA-COMP:14399"/>
        <dbReference type="ChEBI" id="CHEBI:15377"/>
        <dbReference type="ChEBI" id="CHEBI:15378"/>
        <dbReference type="ChEBI" id="CHEBI:15429"/>
        <dbReference type="ChEBI" id="CHEBI:16301"/>
        <dbReference type="ChEBI" id="CHEBI:29033"/>
        <dbReference type="ChEBI" id="CHEBI:29034"/>
        <dbReference type="EC" id="1.7.2.6"/>
    </reaction>
</comment>
<comment type="catalytic activity">
    <reaction evidence="1">
        <text>nitric oxide + Fe(III)-[cytochrome c] + H2O = Fe(II)-[cytochrome c] + nitrite + 2 H(+)</text>
        <dbReference type="Rhea" id="RHEA:15233"/>
        <dbReference type="Rhea" id="RHEA-COMP:10350"/>
        <dbReference type="Rhea" id="RHEA-COMP:14399"/>
        <dbReference type="ChEBI" id="CHEBI:15377"/>
        <dbReference type="ChEBI" id="CHEBI:15378"/>
        <dbReference type="ChEBI" id="CHEBI:16301"/>
        <dbReference type="ChEBI" id="CHEBI:16480"/>
        <dbReference type="ChEBI" id="CHEBI:29033"/>
        <dbReference type="ChEBI" id="CHEBI:29034"/>
        <dbReference type="EC" id="1.7.2.1"/>
    </reaction>
</comment>
<comment type="cofactor">
    <cofactor evidence="1">
        <name>Cu cation</name>
        <dbReference type="ChEBI" id="CHEBI:23378"/>
    </cofactor>
</comment>
<comment type="cofactor">
    <cofactor>
        <name>heme</name>
        <dbReference type="ChEBI" id="CHEBI:30413"/>
    </cofactor>
    <text evidence="2">Binds 8 heme groups per subunit.</text>
</comment>
<comment type="subcellular location">
    <subcellularLocation>
        <location evidence="4">Encapsulin nanocompartment</location>
    </subcellularLocation>
</comment>
<comment type="miscellaneous">
    <text evidence="4">In (PubMed:28263314) the construct expressed anaerobically in E.coli contains only the nitrite reductase domain (residues 28-327).</text>
</comment>
<comment type="similarity">
    <text evidence="6">In the N-terminal section; belongs to the multicopper oxidase family.</text>
</comment>
<keyword id="KW-0186">Copper</keyword>
<keyword id="KW-1284">Encapsulin nanocompartment</keyword>
<keyword id="KW-0349">Heme</keyword>
<keyword id="KW-0408">Iron</keyword>
<keyword id="KW-0479">Metal-binding</keyword>
<keyword id="KW-0560">Oxidoreductase</keyword>
<keyword id="KW-0677">Repeat</keyword>
<keyword id="KW-0732">Signal</keyword>